<protein>
    <recommendedName>
        <fullName evidence="1">ATP-dependent Clp protease ATP-binding subunit ClpX</fullName>
    </recommendedName>
</protein>
<keyword id="KW-0067">ATP-binding</keyword>
<keyword id="KW-0143">Chaperone</keyword>
<keyword id="KW-0479">Metal-binding</keyword>
<keyword id="KW-0547">Nucleotide-binding</keyword>
<keyword id="KW-0862">Zinc</keyword>
<evidence type="ECO:0000255" key="1">
    <source>
        <dbReference type="HAMAP-Rule" id="MF_00175"/>
    </source>
</evidence>
<evidence type="ECO:0000255" key="2">
    <source>
        <dbReference type="PROSITE-ProRule" id="PRU01250"/>
    </source>
</evidence>
<accession>A2RF17</accession>
<comment type="function">
    <text evidence="1">ATP-dependent specificity component of the Clp protease. It directs the protease to specific substrates. Can perform chaperone functions in the absence of ClpP.</text>
</comment>
<comment type="subunit">
    <text evidence="1">Component of the ClpX-ClpP complex. Forms a hexameric ring that, in the presence of ATP, binds to fourteen ClpP subunits assembled into a disk-like structure with a central cavity, resembling the structure of eukaryotic proteasomes.</text>
</comment>
<comment type="similarity">
    <text evidence="1">Belongs to the ClpX chaperone family.</text>
</comment>
<proteinExistence type="inferred from homology"/>
<reference key="1">
    <citation type="journal article" date="2007" name="J. Bacteriol.">
        <title>Complete genome of acute rheumatic fever-associated serotype M5 Streptococcus pyogenes strain Manfredo.</title>
        <authorList>
            <person name="Holden M.T.G."/>
            <person name="Scott A."/>
            <person name="Cherevach I."/>
            <person name="Chillingworth T."/>
            <person name="Churcher C."/>
            <person name="Cronin A."/>
            <person name="Dowd L."/>
            <person name="Feltwell T."/>
            <person name="Hamlin N."/>
            <person name="Holroyd S."/>
            <person name="Jagels K."/>
            <person name="Moule S."/>
            <person name="Mungall K."/>
            <person name="Quail M.A."/>
            <person name="Price C."/>
            <person name="Rabbinowitsch E."/>
            <person name="Sharp S."/>
            <person name="Skelton J."/>
            <person name="Whitehead S."/>
            <person name="Barrell B.G."/>
            <person name="Kehoe M."/>
            <person name="Parkhill J."/>
        </authorList>
    </citation>
    <scope>NUCLEOTIDE SEQUENCE [LARGE SCALE GENOMIC DNA]</scope>
    <source>
        <strain>Manfredo</strain>
    </source>
</reference>
<feature type="chain" id="PRO_1000024682" description="ATP-dependent Clp protease ATP-binding subunit ClpX">
    <location>
        <begin position="1"/>
        <end position="409"/>
    </location>
</feature>
<feature type="domain" description="ClpX-type ZB" evidence="2">
    <location>
        <begin position="1"/>
        <end position="54"/>
    </location>
</feature>
<feature type="binding site" evidence="2">
    <location>
        <position position="13"/>
    </location>
    <ligand>
        <name>Zn(2+)</name>
        <dbReference type="ChEBI" id="CHEBI:29105"/>
    </ligand>
</feature>
<feature type="binding site" evidence="2">
    <location>
        <position position="16"/>
    </location>
    <ligand>
        <name>Zn(2+)</name>
        <dbReference type="ChEBI" id="CHEBI:29105"/>
    </ligand>
</feature>
<feature type="binding site" evidence="2">
    <location>
        <position position="35"/>
    </location>
    <ligand>
        <name>Zn(2+)</name>
        <dbReference type="ChEBI" id="CHEBI:29105"/>
    </ligand>
</feature>
<feature type="binding site" evidence="2">
    <location>
        <position position="38"/>
    </location>
    <ligand>
        <name>Zn(2+)</name>
        <dbReference type="ChEBI" id="CHEBI:29105"/>
    </ligand>
</feature>
<feature type="binding site" evidence="1">
    <location>
        <begin position="119"/>
        <end position="126"/>
    </location>
    <ligand>
        <name>ATP</name>
        <dbReference type="ChEBI" id="CHEBI:30616"/>
    </ligand>
</feature>
<organism>
    <name type="scientific">Streptococcus pyogenes serotype M5 (strain Manfredo)</name>
    <dbReference type="NCBI Taxonomy" id="160491"/>
    <lineage>
        <taxon>Bacteria</taxon>
        <taxon>Bacillati</taxon>
        <taxon>Bacillota</taxon>
        <taxon>Bacilli</taxon>
        <taxon>Lactobacillales</taxon>
        <taxon>Streptococcaceae</taxon>
        <taxon>Streptococcus</taxon>
    </lineage>
</organism>
<gene>
    <name evidence="1" type="primary">clpX</name>
    <name type="ordered locus">SpyM51117</name>
</gene>
<sequence length="409" mass="45006">MAGSRTNDIKVYCSFCGKSQDDVKKIIAGNNVFICNECVALSQEIIKEELAEEVLADLTEVPKPKELLDVLNQYVVGQDRAKRALSVAVYNHYKRVSFTESRDDDDVDLQKSNILMIGPTGSGKTFLAQTLAKSLNVPFAIADATSLTEAGYVGEDVENILLKLIQAADYNVERAERGIIYVDEIDKIAKKGENVSITRDVSGEGVQQALLKIIEGTVASVPPQGGRKHPNQEMIQIDTKNILFIVGGAFDGIEEIVKQRLGEKVIGFGQNSRKIDDNASYMQEIISEDIQKFGLIPEFIGRLPVVAALEQLNTSDLIRILTEPRNALVKQYQALLSYDGVELEFDKAALEAIATKAIERKTGARGLRSIIEETMLDIMFEIPSQEDVTKVRITKAAVEGKSKPVLETA</sequence>
<name>CLPX_STRPG</name>
<dbReference type="EMBL" id="AM295007">
    <property type="protein sequence ID" value="CAM30443.1"/>
    <property type="molecule type" value="Genomic_DNA"/>
</dbReference>
<dbReference type="RefSeq" id="WP_011888976.1">
    <property type="nucleotide sequence ID" value="NC_009332.1"/>
</dbReference>
<dbReference type="SMR" id="A2RF17"/>
<dbReference type="KEGG" id="spf:SpyM51117"/>
<dbReference type="HOGENOM" id="CLU_014218_8_2_9"/>
<dbReference type="GO" id="GO:0009376">
    <property type="term" value="C:HslUV protease complex"/>
    <property type="evidence" value="ECO:0007669"/>
    <property type="project" value="TreeGrafter"/>
</dbReference>
<dbReference type="GO" id="GO:0005524">
    <property type="term" value="F:ATP binding"/>
    <property type="evidence" value="ECO:0007669"/>
    <property type="project" value="UniProtKB-UniRule"/>
</dbReference>
<dbReference type="GO" id="GO:0016887">
    <property type="term" value="F:ATP hydrolysis activity"/>
    <property type="evidence" value="ECO:0007669"/>
    <property type="project" value="InterPro"/>
</dbReference>
<dbReference type="GO" id="GO:0140662">
    <property type="term" value="F:ATP-dependent protein folding chaperone"/>
    <property type="evidence" value="ECO:0007669"/>
    <property type="project" value="InterPro"/>
</dbReference>
<dbReference type="GO" id="GO:0046983">
    <property type="term" value="F:protein dimerization activity"/>
    <property type="evidence" value="ECO:0007669"/>
    <property type="project" value="InterPro"/>
</dbReference>
<dbReference type="GO" id="GO:0051082">
    <property type="term" value="F:unfolded protein binding"/>
    <property type="evidence" value="ECO:0007669"/>
    <property type="project" value="UniProtKB-UniRule"/>
</dbReference>
<dbReference type="GO" id="GO:0008270">
    <property type="term" value="F:zinc ion binding"/>
    <property type="evidence" value="ECO:0007669"/>
    <property type="project" value="InterPro"/>
</dbReference>
<dbReference type="GO" id="GO:0051301">
    <property type="term" value="P:cell division"/>
    <property type="evidence" value="ECO:0007669"/>
    <property type="project" value="TreeGrafter"/>
</dbReference>
<dbReference type="GO" id="GO:0051603">
    <property type="term" value="P:proteolysis involved in protein catabolic process"/>
    <property type="evidence" value="ECO:0007669"/>
    <property type="project" value="TreeGrafter"/>
</dbReference>
<dbReference type="CDD" id="cd19497">
    <property type="entry name" value="RecA-like_ClpX"/>
    <property type="match status" value="1"/>
</dbReference>
<dbReference type="FunFam" id="1.10.8.60:FF:000002">
    <property type="entry name" value="ATP-dependent Clp protease ATP-binding subunit ClpX"/>
    <property type="match status" value="1"/>
</dbReference>
<dbReference type="FunFam" id="3.40.50.300:FF:000005">
    <property type="entry name" value="ATP-dependent Clp protease ATP-binding subunit ClpX"/>
    <property type="match status" value="1"/>
</dbReference>
<dbReference type="Gene3D" id="1.10.8.60">
    <property type="match status" value="1"/>
</dbReference>
<dbReference type="Gene3D" id="6.20.220.10">
    <property type="entry name" value="ClpX chaperone, C4-type zinc finger domain"/>
    <property type="match status" value="1"/>
</dbReference>
<dbReference type="Gene3D" id="3.40.50.300">
    <property type="entry name" value="P-loop containing nucleotide triphosphate hydrolases"/>
    <property type="match status" value="1"/>
</dbReference>
<dbReference type="HAMAP" id="MF_00175">
    <property type="entry name" value="ClpX"/>
    <property type="match status" value="1"/>
</dbReference>
<dbReference type="InterPro" id="IPR003593">
    <property type="entry name" value="AAA+_ATPase"/>
</dbReference>
<dbReference type="InterPro" id="IPR050052">
    <property type="entry name" value="ATP-dep_Clp_protease_ClpX"/>
</dbReference>
<dbReference type="InterPro" id="IPR003959">
    <property type="entry name" value="ATPase_AAA_core"/>
</dbReference>
<dbReference type="InterPro" id="IPR019489">
    <property type="entry name" value="Clp_ATPase_C"/>
</dbReference>
<dbReference type="InterPro" id="IPR004487">
    <property type="entry name" value="Clp_protease_ATP-bd_su_ClpX"/>
</dbReference>
<dbReference type="InterPro" id="IPR046425">
    <property type="entry name" value="ClpX_bact"/>
</dbReference>
<dbReference type="InterPro" id="IPR027417">
    <property type="entry name" value="P-loop_NTPase"/>
</dbReference>
<dbReference type="InterPro" id="IPR010603">
    <property type="entry name" value="Znf_CppX_C4"/>
</dbReference>
<dbReference type="InterPro" id="IPR038366">
    <property type="entry name" value="Znf_CppX_C4_sf"/>
</dbReference>
<dbReference type="NCBIfam" id="TIGR00382">
    <property type="entry name" value="clpX"/>
    <property type="match status" value="1"/>
</dbReference>
<dbReference type="NCBIfam" id="NF003745">
    <property type="entry name" value="PRK05342.1"/>
    <property type="match status" value="1"/>
</dbReference>
<dbReference type="PANTHER" id="PTHR48102:SF7">
    <property type="entry name" value="ATP-DEPENDENT CLP PROTEASE ATP-BINDING SUBUNIT CLPX-LIKE, MITOCHONDRIAL"/>
    <property type="match status" value="1"/>
</dbReference>
<dbReference type="PANTHER" id="PTHR48102">
    <property type="entry name" value="ATP-DEPENDENT CLP PROTEASE ATP-BINDING SUBUNIT CLPX-LIKE, MITOCHONDRIAL-RELATED"/>
    <property type="match status" value="1"/>
</dbReference>
<dbReference type="Pfam" id="PF07724">
    <property type="entry name" value="AAA_2"/>
    <property type="match status" value="1"/>
</dbReference>
<dbReference type="Pfam" id="PF10431">
    <property type="entry name" value="ClpB_D2-small"/>
    <property type="match status" value="1"/>
</dbReference>
<dbReference type="Pfam" id="PF06689">
    <property type="entry name" value="zf-C4_ClpX"/>
    <property type="match status" value="1"/>
</dbReference>
<dbReference type="SMART" id="SM00382">
    <property type="entry name" value="AAA"/>
    <property type="match status" value="1"/>
</dbReference>
<dbReference type="SMART" id="SM01086">
    <property type="entry name" value="ClpB_D2-small"/>
    <property type="match status" value="1"/>
</dbReference>
<dbReference type="SMART" id="SM00994">
    <property type="entry name" value="zf-C4_ClpX"/>
    <property type="match status" value="1"/>
</dbReference>
<dbReference type="SUPFAM" id="SSF57716">
    <property type="entry name" value="Glucocorticoid receptor-like (DNA-binding domain)"/>
    <property type="match status" value="1"/>
</dbReference>
<dbReference type="SUPFAM" id="SSF52540">
    <property type="entry name" value="P-loop containing nucleoside triphosphate hydrolases"/>
    <property type="match status" value="1"/>
</dbReference>
<dbReference type="PROSITE" id="PS51902">
    <property type="entry name" value="CLPX_ZB"/>
    <property type="match status" value="1"/>
</dbReference>